<comment type="function">
    <text evidence="4">Serine proteases that hydrolyze many proteins in addition to elastin.</text>
</comment>
<comment type="catalytic activity">
    <reaction evidence="4">
        <text>Hydrolysis of proteins, including elastin. Preferential cleavage: Ala-|-Xaa.</text>
        <dbReference type="EC" id="3.4.21.36"/>
    </reaction>
</comment>
<comment type="cofactor">
    <cofactor evidence="1">
        <name>Ca(2+)</name>
        <dbReference type="ChEBI" id="CHEBI:29108"/>
    </cofactor>
    <text evidence="1">Binds 1 Ca(2+) ion per subunit.</text>
</comment>
<comment type="subcellular location">
    <subcellularLocation>
        <location evidence="1">Secreted</location>
    </subcellularLocation>
</comment>
<comment type="similarity">
    <text evidence="3">Belongs to the peptidase S1 family. Elastase subfamily.</text>
</comment>
<dbReference type="EC" id="3.4.21.36" evidence="4"/>
<dbReference type="EMBL" id="AK007392">
    <property type="protein sequence ID" value="BAB25008.1"/>
    <property type="molecule type" value="mRNA"/>
</dbReference>
<dbReference type="EMBL" id="AC123724">
    <property type="status" value="NOT_ANNOTATED_CDS"/>
    <property type="molecule type" value="Genomic_DNA"/>
</dbReference>
<dbReference type="EMBL" id="CH466550">
    <property type="protein sequence ID" value="EDL04074.1"/>
    <property type="molecule type" value="Genomic_DNA"/>
</dbReference>
<dbReference type="EMBL" id="BC011218">
    <property type="protein sequence ID" value="AAH11218.1"/>
    <property type="molecule type" value="mRNA"/>
</dbReference>
<dbReference type="EMBL" id="M27347">
    <property type="protein sequence ID" value="AAA39901.1"/>
    <property type="molecule type" value="mRNA"/>
</dbReference>
<dbReference type="CCDS" id="CCDS37213.1"/>
<dbReference type="RefSeq" id="NP_291090.2">
    <property type="nucleotide sequence ID" value="NM_033612.2"/>
</dbReference>
<dbReference type="SMR" id="Q91X79"/>
<dbReference type="BioGRID" id="225137">
    <property type="interactions" value="1"/>
</dbReference>
<dbReference type="FunCoup" id="Q91X79">
    <property type="interactions" value="187"/>
</dbReference>
<dbReference type="STRING" id="10090.ENSMUSP00000023775"/>
<dbReference type="MEROPS" id="S01.153"/>
<dbReference type="GlyCosmos" id="Q91X79">
    <property type="glycosylation" value="1 site, No reported glycans"/>
</dbReference>
<dbReference type="GlyGen" id="Q91X79">
    <property type="glycosylation" value="1 site"/>
</dbReference>
<dbReference type="PhosphoSitePlus" id="Q91X79"/>
<dbReference type="jPOST" id="Q91X79"/>
<dbReference type="PaxDb" id="10090-ENSMUSP00000023775"/>
<dbReference type="PeptideAtlas" id="Q91X79"/>
<dbReference type="ProteomicsDB" id="279998"/>
<dbReference type="Antibodypedia" id="14377">
    <property type="antibodies" value="151 antibodies from 21 providers"/>
</dbReference>
<dbReference type="DNASU" id="109901"/>
<dbReference type="Ensembl" id="ENSMUST00000023775.9">
    <property type="protein sequence ID" value="ENSMUSP00000023775.8"/>
    <property type="gene ID" value="ENSMUSG00000023031.9"/>
</dbReference>
<dbReference type="GeneID" id="109901"/>
<dbReference type="KEGG" id="mmu:109901"/>
<dbReference type="UCSC" id="uc007xrx.2">
    <property type="organism name" value="mouse"/>
</dbReference>
<dbReference type="AGR" id="MGI:95314"/>
<dbReference type="CTD" id="1990"/>
<dbReference type="MGI" id="MGI:95314">
    <property type="gene designation" value="Cela1"/>
</dbReference>
<dbReference type="VEuPathDB" id="HostDB:ENSMUSG00000023031"/>
<dbReference type="eggNOG" id="KOG3627">
    <property type="taxonomic scope" value="Eukaryota"/>
</dbReference>
<dbReference type="GeneTree" id="ENSGT01030000234528"/>
<dbReference type="HOGENOM" id="CLU_006842_0_4_1"/>
<dbReference type="InParanoid" id="Q91X79"/>
<dbReference type="OMA" id="KQGCNVS"/>
<dbReference type="OrthoDB" id="10061449at2759"/>
<dbReference type="PhylomeDB" id="Q91X79"/>
<dbReference type="TreeFam" id="TF330455"/>
<dbReference type="BioGRID-ORCS" id="109901">
    <property type="hits" value="3 hits in 77 CRISPR screens"/>
</dbReference>
<dbReference type="ChiTaRS" id="Cela1">
    <property type="organism name" value="mouse"/>
</dbReference>
<dbReference type="PRO" id="PR:Q91X79"/>
<dbReference type="Proteomes" id="UP000000589">
    <property type="component" value="Chromosome 15"/>
</dbReference>
<dbReference type="RNAct" id="Q91X79">
    <property type="molecule type" value="protein"/>
</dbReference>
<dbReference type="Bgee" id="ENSMUSG00000023031">
    <property type="expression patterns" value="Expressed in pyloric antrum and 140 other cell types or tissues"/>
</dbReference>
<dbReference type="ExpressionAtlas" id="Q91X79">
    <property type="expression patterns" value="baseline and differential"/>
</dbReference>
<dbReference type="GO" id="GO:0062023">
    <property type="term" value="C:collagen-containing extracellular matrix"/>
    <property type="evidence" value="ECO:0007005"/>
    <property type="project" value="BHF-UCL"/>
</dbReference>
<dbReference type="GO" id="GO:0005576">
    <property type="term" value="C:extracellular region"/>
    <property type="evidence" value="ECO:0007669"/>
    <property type="project" value="UniProtKB-SubCell"/>
</dbReference>
<dbReference type="GO" id="GO:0046872">
    <property type="term" value="F:metal ion binding"/>
    <property type="evidence" value="ECO:0007669"/>
    <property type="project" value="UniProtKB-KW"/>
</dbReference>
<dbReference type="GO" id="GO:0004252">
    <property type="term" value="F:serine-type endopeptidase activity"/>
    <property type="evidence" value="ECO:0000314"/>
    <property type="project" value="UniProtKB"/>
</dbReference>
<dbReference type="GO" id="GO:0055123">
    <property type="term" value="P:digestive system development"/>
    <property type="evidence" value="ECO:0000315"/>
    <property type="project" value="MGI"/>
</dbReference>
<dbReference type="GO" id="GO:0060309">
    <property type="term" value="P:elastin catabolic process"/>
    <property type="evidence" value="ECO:0000315"/>
    <property type="project" value="MGI"/>
</dbReference>
<dbReference type="GO" id="GO:0031017">
    <property type="term" value="P:exocrine pancreas development"/>
    <property type="evidence" value="ECO:0000315"/>
    <property type="project" value="MGI"/>
</dbReference>
<dbReference type="GO" id="GO:0006954">
    <property type="term" value="P:inflammatory response"/>
    <property type="evidence" value="ECO:0000315"/>
    <property type="project" value="MGI"/>
</dbReference>
<dbReference type="GO" id="GO:0035264">
    <property type="term" value="P:multicellular organism growth"/>
    <property type="evidence" value="ECO:0000315"/>
    <property type="project" value="MGI"/>
</dbReference>
<dbReference type="GO" id="GO:0000122">
    <property type="term" value="P:negative regulation of transcription by RNA polymerase II"/>
    <property type="evidence" value="ECO:0000315"/>
    <property type="project" value="MGI"/>
</dbReference>
<dbReference type="GO" id="GO:0061113">
    <property type="term" value="P:pancreas morphogenesis"/>
    <property type="evidence" value="ECO:0000315"/>
    <property type="project" value="MGI"/>
</dbReference>
<dbReference type="GO" id="GO:0045766">
    <property type="term" value="P:positive regulation of angiogenesis"/>
    <property type="evidence" value="ECO:0000314"/>
    <property type="project" value="MGI"/>
</dbReference>
<dbReference type="GO" id="GO:0045944">
    <property type="term" value="P:positive regulation of transcription by RNA polymerase II"/>
    <property type="evidence" value="ECO:0000315"/>
    <property type="project" value="MGI"/>
</dbReference>
<dbReference type="GO" id="GO:0009791">
    <property type="term" value="P:post-embryonic development"/>
    <property type="evidence" value="ECO:0000315"/>
    <property type="project" value="MGI"/>
</dbReference>
<dbReference type="GO" id="GO:0006508">
    <property type="term" value="P:proteolysis"/>
    <property type="evidence" value="ECO:0007669"/>
    <property type="project" value="UniProtKB-KW"/>
</dbReference>
<dbReference type="GO" id="GO:0045595">
    <property type="term" value="P:regulation of cell differentiation"/>
    <property type="evidence" value="ECO:0000315"/>
    <property type="project" value="MGI"/>
</dbReference>
<dbReference type="GO" id="GO:0042127">
    <property type="term" value="P:regulation of cell population proliferation"/>
    <property type="evidence" value="ECO:0000315"/>
    <property type="project" value="MGI"/>
</dbReference>
<dbReference type="GO" id="GO:0048771">
    <property type="term" value="P:tissue remodeling"/>
    <property type="evidence" value="ECO:0000315"/>
    <property type="project" value="MGI"/>
</dbReference>
<dbReference type="GO" id="GO:0006366">
    <property type="term" value="P:transcription by RNA polymerase II"/>
    <property type="evidence" value="ECO:0000315"/>
    <property type="project" value="MGI"/>
</dbReference>
<dbReference type="GO" id="GO:0016055">
    <property type="term" value="P:Wnt signaling pathway"/>
    <property type="evidence" value="ECO:0000315"/>
    <property type="project" value="MGI"/>
</dbReference>
<dbReference type="CDD" id="cd00190">
    <property type="entry name" value="Tryp_SPc"/>
    <property type="match status" value="1"/>
</dbReference>
<dbReference type="FunFam" id="2.40.10.10:FF:000280">
    <property type="match status" value="1"/>
</dbReference>
<dbReference type="FunFam" id="2.40.10.10:FF:000122">
    <property type="entry name" value="Chymotrypsin-like elastase family member 1"/>
    <property type="match status" value="1"/>
</dbReference>
<dbReference type="Gene3D" id="2.40.10.10">
    <property type="entry name" value="Trypsin-like serine proteases"/>
    <property type="match status" value="2"/>
</dbReference>
<dbReference type="InterPro" id="IPR050850">
    <property type="entry name" value="Peptidase_S1_Elastase_sf"/>
</dbReference>
<dbReference type="InterPro" id="IPR009003">
    <property type="entry name" value="Peptidase_S1_PA"/>
</dbReference>
<dbReference type="InterPro" id="IPR043504">
    <property type="entry name" value="Peptidase_S1_PA_chymotrypsin"/>
</dbReference>
<dbReference type="InterPro" id="IPR001314">
    <property type="entry name" value="Peptidase_S1A"/>
</dbReference>
<dbReference type="InterPro" id="IPR001254">
    <property type="entry name" value="Trypsin_dom"/>
</dbReference>
<dbReference type="InterPro" id="IPR018114">
    <property type="entry name" value="TRYPSIN_HIS"/>
</dbReference>
<dbReference type="InterPro" id="IPR033116">
    <property type="entry name" value="TRYPSIN_SER"/>
</dbReference>
<dbReference type="PANTHER" id="PTHR24257">
    <property type="entry name" value="CHYMOTRYPSIN-LIKE ELASTASE FAMILY MEMBER"/>
    <property type="match status" value="1"/>
</dbReference>
<dbReference type="PANTHER" id="PTHR24257:SF0">
    <property type="entry name" value="CHYMOTRYPSIN-LIKE ELASTASE FAMILY MEMBER 1"/>
    <property type="match status" value="1"/>
</dbReference>
<dbReference type="Pfam" id="PF00089">
    <property type="entry name" value="Trypsin"/>
    <property type="match status" value="1"/>
</dbReference>
<dbReference type="PRINTS" id="PR00722">
    <property type="entry name" value="CHYMOTRYPSIN"/>
</dbReference>
<dbReference type="SMART" id="SM00020">
    <property type="entry name" value="Tryp_SPc"/>
    <property type="match status" value="1"/>
</dbReference>
<dbReference type="SUPFAM" id="SSF50494">
    <property type="entry name" value="Trypsin-like serine proteases"/>
    <property type="match status" value="1"/>
</dbReference>
<dbReference type="PROSITE" id="PS50240">
    <property type="entry name" value="TRYPSIN_DOM"/>
    <property type="match status" value="1"/>
</dbReference>
<dbReference type="PROSITE" id="PS00134">
    <property type="entry name" value="TRYPSIN_HIS"/>
    <property type="match status" value="1"/>
</dbReference>
<dbReference type="PROSITE" id="PS00135">
    <property type="entry name" value="TRYPSIN_SER"/>
    <property type="match status" value="1"/>
</dbReference>
<sequence>MLRFLVFASLVLCGHSTEDVPETDARVVGGAEARRNSWPSQISLQYQYGGSWHHTCGGTLIRSNWVMTAAHCVDSPMTYRVVVGEHNLSQNDGTEQYVNVQKIVSHPYWNKNNVVAGYDIALLRLAKSVTLNNYVQLGVLPREGTILANNSPCYITGWGRTRTNGELAQTLQQAYLPSVSYSICSSSSYWGSSVKNTMVCAGGDGVRSGCQGDSGGPLHCMVNGQYAVHGVTSFVSSMGCNVARKPTVFTRVSAYISWMNNVIASN</sequence>
<evidence type="ECO:0000250" key="1">
    <source>
        <dbReference type="UniProtKB" id="P00772"/>
    </source>
</evidence>
<evidence type="ECO:0000255" key="2"/>
<evidence type="ECO:0000255" key="3">
    <source>
        <dbReference type="PROSITE-ProRule" id="PRU00274"/>
    </source>
</evidence>
<evidence type="ECO:0000269" key="4">
    <source>
    </source>
</evidence>
<evidence type="ECO:0000305" key="5"/>
<feature type="signal peptide" evidence="1">
    <location>
        <begin position="1"/>
        <end position="16"/>
    </location>
</feature>
<feature type="propeptide" id="PRO_0000416103" description="Activation peptide" evidence="1">
    <location>
        <begin position="17"/>
        <end position="26"/>
    </location>
</feature>
<feature type="chain" id="PRO_0000416104" description="Chymotrypsin-like elastase family member 1">
    <location>
        <begin position="27"/>
        <end position="266"/>
    </location>
</feature>
<feature type="domain" description="Peptidase S1" evidence="3">
    <location>
        <begin position="27"/>
        <end position="264"/>
    </location>
</feature>
<feature type="active site" description="Charge relay system" evidence="1">
    <location>
        <position position="71"/>
    </location>
</feature>
<feature type="active site" description="Charge relay system" evidence="1">
    <location>
        <position position="119"/>
    </location>
</feature>
<feature type="active site" description="Charge relay system" evidence="1">
    <location>
        <position position="214"/>
    </location>
</feature>
<feature type="binding site" evidence="1">
    <location>
        <position position="85"/>
    </location>
    <ligand>
        <name>Ca(2+)</name>
        <dbReference type="ChEBI" id="CHEBI:29108"/>
    </ligand>
</feature>
<feature type="binding site" evidence="1">
    <location>
        <position position="87"/>
    </location>
    <ligand>
        <name>Ca(2+)</name>
        <dbReference type="ChEBI" id="CHEBI:29108"/>
    </ligand>
</feature>
<feature type="binding site" evidence="1">
    <location>
        <position position="90"/>
    </location>
    <ligand>
        <name>Ca(2+)</name>
        <dbReference type="ChEBI" id="CHEBI:29108"/>
    </ligand>
</feature>
<feature type="binding site" evidence="1">
    <location>
        <position position="95"/>
    </location>
    <ligand>
        <name>Ca(2+)</name>
        <dbReference type="ChEBI" id="CHEBI:29108"/>
    </ligand>
</feature>
<feature type="glycosylation site" description="N-linked (GlcNAc...) asparagine" evidence="2">
    <location>
        <position position="87"/>
    </location>
</feature>
<feature type="disulfide bond" evidence="3">
    <location>
        <begin position="56"/>
        <end position="72"/>
    </location>
</feature>
<feature type="disulfide bond" evidence="3">
    <location>
        <begin position="153"/>
        <end position="220"/>
    </location>
</feature>
<feature type="disulfide bond" evidence="3">
    <location>
        <begin position="184"/>
        <end position="200"/>
    </location>
</feature>
<feature type="disulfide bond" evidence="3">
    <location>
        <begin position="210"/>
        <end position="240"/>
    </location>
</feature>
<feature type="sequence conflict" description="In Ref. 1; BAB25008." evidence="5" ref="1">
    <original>L</original>
    <variation>P</variation>
    <location>
        <position position="12"/>
    </location>
</feature>
<feature type="sequence conflict" description="In Ref. 1; BAB25008." evidence="5" ref="1">
    <original>V</original>
    <variation>M</variation>
    <location>
        <position position="27"/>
    </location>
</feature>
<feature type="sequence conflict" description="In Ref. 5; AAA39901." evidence="5" ref="5">
    <original>AEA</original>
    <variation>EFP</variation>
    <location>
        <begin position="31"/>
        <end position="33"/>
    </location>
</feature>
<feature type="sequence conflict" description="In Ref. 5; AAA39901." evidence="5" ref="5">
    <original>L</original>
    <variation>V</variation>
    <location>
        <position position="123"/>
    </location>
</feature>
<feature type="sequence conflict" description="In Ref. 5; AAA39901." evidence="5" ref="5">
    <original>V</original>
    <variation>L</variation>
    <location>
        <position position="194"/>
    </location>
</feature>
<feature type="sequence conflict" description="In Ref. 5; AAA39901." evidence="5" ref="5">
    <original>G</original>
    <variation>C</variation>
    <location>
        <position position="202"/>
    </location>
</feature>
<feature type="sequence conflict" description="In Ref. 5; AAA39901." evidence="5" ref="5">
    <original>H</original>
    <variation>D</variation>
    <location>
        <position position="229"/>
    </location>
</feature>
<feature type="sequence conflict" description="In Ref. 5; AAA39901." evidence="5" ref="5">
    <original>V</original>
    <variation>L</variation>
    <location>
        <position position="252"/>
    </location>
</feature>
<accession>Q91X79</accession>
<accession>Q9D936</accession>
<accession>Q9Z1H1</accession>
<reference key="1">
    <citation type="journal article" date="2005" name="Science">
        <title>The transcriptional landscape of the mammalian genome.</title>
        <authorList>
            <person name="Carninci P."/>
            <person name="Kasukawa T."/>
            <person name="Katayama S."/>
            <person name="Gough J."/>
            <person name="Frith M.C."/>
            <person name="Maeda N."/>
            <person name="Oyama R."/>
            <person name="Ravasi T."/>
            <person name="Lenhard B."/>
            <person name="Wells C."/>
            <person name="Kodzius R."/>
            <person name="Shimokawa K."/>
            <person name="Bajic V.B."/>
            <person name="Brenner S.E."/>
            <person name="Batalov S."/>
            <person name="Forrest A.R."/>
            <person name="Zavolan M."/>
            <person name="Davis M.J."/>
            <person name="Wilming L.G."/>
            <person name="Aidinis V."/>
            <person name="Allen J.E."/>
            <person name="Ambesi-Impiombato A."/>
            <person name="Apweiler R."/>
            <person name="Aturaliya R.N."/>
            <person name="Bailey T.L."/>
            <person name="Bansal M."/>
            <person name="Baxter L."/>
            <person name="Beisel K.W."/>
            <person name="Bersano T."/>
            <person name="Bono H."/>
            <person name="Chalk A.M."/>
            <person name="Chiu K.P."/>
            <person name="Choudhary V."/>
            <person name="Christoffels A."/>
            <person name="Clutterbuck D.R."/>
            <person name="Crowe M.L."/>
            <person name="Dalla E."/>
            <person name="Dalrymple B.P."/>
            <person name="de Bono B."/>
            <person name="Della Gatta G."/>
            <person name="di Bernardo D."/>
            <person name="Down T."/>
            <person name="Engstrom P."/>
            <person name="Fagiolini M."/>
            <person name="Faulkner G."/>
            <person name="Fletcher C.F."/>
            <person name="Fukushima T."/>
            <person name="Furuno M."/>
            <person name="Futaki S."/>
            <person name="Gariboldi M."/>
            <person name="Georgii-Hemming P."/>
            <person name="Gingeras T.R."/>
            <person name="Gojobori T."/>
            <person name="Green R.E."/>
            <person name="Gustincich S."/>
            <person name="Harbers M."/>
            <person name="Hayashi Y."/>
            <person name="Hensch T.K."/>
            <person name="Hirokawa N."/>
            <person name="Hill D."/>
            <person name="Huminiecki L."/>
            <person name="Iacono M."/>
            <person name="Ikeo K."/>
            <person name="Iwama A."/>
            <person name="Ishikawa T."/>
            <person name="Jakt M."/>
            <person name="Kanapin A."/>
            <person name="Katoh M."/>
            <person name="Kawasawa Y."/>
            <person name="Kelso J."/>
            <person name="Kitamura H."/>
            <person name="Kitano H."/>
            <person name="Kollias G."/>
            <person name="Krishnan S.P."/>
            <person name="Kruger A."/>
            <person name="Kummerfeld S.K."/>
            <person name="Kurochkin I.V."/>
            <person name="Lareau L.F."/>
            <person name="Lazarevic D."/>
            <person name="Lipovich L."/>
            <person name="Liu J."/>
            <person name="Liuni S."/>
            <person name="McWilliam S."/>
            <person name="Madan Babu M."/>
            <person name="Madera M."/>
            <person name="Marchionni L."/>
            <person name="Matsuda H."/>
            <person name="Matsuzawa S."/>
            <person name="Miki H."/>
            <person name="Mignone F."/>
            <person name="Miyake S."/>
            <person name="Morris K."/>
            <person name="Mottagui-Tabar S."/>
            <person name="Mulder N."/>
            <person name="Nakano N."/>
            <person name="Nakauchi H."/>
            <person name="Ng P."/>
            <person name="Nilsson R."/>
            <person name="Nishiguchi S."/>
            <person name="Nishikawa S."/>
            <person name="Nori F."/>
            <person name="Ohara O."/>
            <person name="Okazaki Y."/>
            <person name="Orlando V."/>
            <person name="Pang K.C."/>
            <person name="Pavan W.J."/>
            <person name="Pavesi G."/>
            <person name="Pesole G."/>
            <person name="Petrovsky N."/>
            <person name="Piazza S."/>
            <person name="Reed J."/>
            <person name="Reid J.F."/>
            <person name="Ring B.Z."/>
            <person name="Ringwald M."/>
            <person name="Rost B."/>
            <person name="Ruan Y."/>
            <person name="Salzberg S.L."/>
            <person name="Sandelin A."/>
            <person name="Schneider C."/>
            <person name="Schoenbach C."/>
            <person name="Sekiguchi K."/>
            <person name="Semple C.A."/>
            <person name="Seno S."/>
            <person name="Sessa L."/>
            <person name="Sheng Y."/>
            <person name="Shibata Y."/>
            <person name="Shimada H."/>
            <person name="Shimada K."/>
            <person name="Silva D."/>
            <person name="Sinclair B."/>
            <person name="Sperling S."/>
            <person name="Stupka E."/>
            <person name="Sugiura K."/>
            <person name="Sultana R."/>
            <person name="Takenaka Y."/>
            <person name="Taki K."/>
            <person name="Tammoja K."/>
            <person name="Tan S.L."/>
            <person name="Tang S."/>
            <person name="Taylor M.S."/>
            <person name="Tegner J."/>
            <person name="Teichmann S.A."/>
            <person name="Ueda H.R."/>
            <person name="van Nimwegen E."/>
            <person name="Verardo R."/>
            <person name="Wei C.L."/>
            <person name="Yagi K."/>
            <person name="Yamanishi H."/>
            <person name="Zabarovsky E."/>
            <person name="Zhu S."/>
            <person name="Zimmer A."/>
            <person name="Hide W."/>
            <person name="Bult C."/>
            <person name="Grimmond S.M."/>
            <person name="Teasdale R.D."/>
            <person name="Liu E.T."/>
            <person name="Brusic V."/>
            <person name="Quackenbush J."/>
            <person name="Wahlestedt C."/>
            <person name="Mattick J.S."/>
            <person name="Hume D.A."/>
            <person name="Kai C."/>
            <person name="Sasaki D."/>
            <person name="Tomaru Y."/>
            <person name="Fukuda S."/>
            <person name="Kanamori-Katayama M."/>
            <person name="Suzuki M."/>
            <person name="Aoki J."/>
            <person name="Arakawa T."/>
            <person name="Iida J."/>
            <person name="Imamura K."/>
            <person name="Itoh M."/>
            <person name="Kato T."/>
            <person name="Kawaji H."/>
            <person name="Kawagashira N."/>
            <person name="Kawashima T."/>
            <person name="Kojima M."/>
            <person name="Kondo S."/>
            <person name="Konno H."/>
            <person name="Nakano K."/>
            <person name="Ninomiya N."/>
            <person name="Nishio T."/>
            <person name="Okada M."/>
            <person name="Plessy C."/>
            <person name="Shibata K."/>
            <person name="Shiraki T."/>
            <person name="Suzuki S."/>
            <person name="Tagami M."/>
            <person name="Waki K."/>
            <person name="Watahiki A."/>
            <person name="Okamura-Oho Y."/>
            <person name="Suzuki H."/>
            <person name="Kawai J."/>
            <person name="Hayashizaki Y."/>
        </authorList>
    </citation>
    <scope>NUCLEOTIDE SEQUENCE [LARGE SCALE MRNA]</scope>
    <source>
        <strain>C57BL/6J</strain>
        <tissue>Pancreas</tissue>
    </source>
</reference>
<reference key="2">
    <citation type="journal article" date="2009" name="PLoS Biol.">
        <title>Lineage-specific biology revealed by a finished genome assembly of the mouse.</title>
        <authorList>
            <person name="Church D.M."/>
            <person name="Goodstadt L."/>
            <person name="Hillier L.W."/>
            <person name="Zody M.C."/>
            <person name="Goldstein S."/>
            <person name="She X."/>
            <person name="Bult C.J."/>
            <person name="Agarwala R."/>
            <person name="Cherry J.L."/>
            <person name="DiCuccio M."/>
            <person name="Hlavina W."/>
            <person name="Kapustin Y."/>
            <person name="Meric P."/>
            <person name="Maglott D."/>
            <person name="Birtle Z."/>
            <person name="Marques A.C."/>
            <person name="Graves T."/>
            <person name="Zhou S."/>
            <person name="Teague B."/>
            <person name="Potamousis K."/>
            <person name="Churas C."/>
            <person name="Place M."/>
            <person name="Herschleb J."/>
            <person name="Runnheim R."/>
            <person name="Forrest D."/>
            <person name="Amos-Landgraf J."/>
            <person name="Schwartz D.C."/>
            <person name="Cheng Z."/>
            <person name="Lindblad-Toh K."/>
            <person name="Eichler E.E."/>
            <person name="Ponting C.P."/>
        </authorList>
    </citation>
    <scope>NUCLEOTIDE SEQUENCE [LARGE SCALE GENOMIC DNA]</scope>
    <source>
        <strain>C57BL/6J</strain>
    </source>
</reference>
<reference key="3">
    <citation type="submission" date="2005-09" db="EMBL/GenBank/DDBJ databases">
        <authorList>
            <person name="Mural R.J."/>
            <person name="Adams M.D."/>
            <person name="Myers E.W."/>
            <person name="Smith H.O."/>
            <person name="Venter J.C."/>
        </authorList>
    </citation>
    <scope>NUCLEOTIDE SEQUENCE [LARGE SCALE GENOMIC DNA]</scope>
</reference>
<reference key="4">
    <citation type="journal article" date="2004" name="Genome Res.">
        <title>The status, quality, and expansion of the NIH full-length cDNA project: the Mammalian Gene Collection (MGC).</title>
        <authorList>
            <consortium name="The MGC Project Team"/>
        </authorList>
    </citation>
    <scope>NUCLEOTIDE SEQUENCE [LARGE SCALE MRNA]</scope>
    <source>
        <strain>FVB/N</strain>
        <tissue>Colon</tissue>
    </source>
</reference>
<reference key="5">
    <citation type="journal article" date="1987" name="Eur. J. Immunol.">
        <title>Sequence analysis of a cDNA clone of a gene encoding a component of a putative phosphorylcholine-specific T suppressor factor and functional property of its gene product.</title>
        <authorList>
            <person name="Yamasaki N."/>
            <person name="Sugimura K."/>
            <person name="Hiida M."/>
            <person name="Naito T."/>
            <person name="Watanabe T."/>
        </authorList>
    </citation>
    <scope>NUCLEOTIDE SEQUENCE [MRNA]</scope>
</reference>
<reference key="6">
    <citation type="journal article" date="2010" name="Cell">
        <title>A tissue-specific atlas of mouse protein phosphorylation and expression.</title>
        <authorList>
            <person name="Huttlin E.L."/>
            <person name="Jedrychowski M.P."/>
            <person name="Elias J.E."/>
            <person name="Goswami T."/>
            <person name="Rad R."/>
            <person name="Beausoleil S.A."/>
            <person name="Villen J."/>
            <person name="Haas W."/>
            <person name="Sowa M.E."/>
            <person name="Gygi S.P."/>
        </authorList>
    </citation>
    <scope>IDENTIFICATION BY MASS SPECTROMETRY [LARGE SCALE ANALYSIS]</scope>
    <source>
        <tissue>Liver</tissue>
        <tissue>Lung</tissue>
        <tissue>Pancreas</tissue>
        <tissue>Spleen</tissue>
    </source>
</reference>
<reference key="7">
    <citation type="journal article" date="2022" name="Sci. Immunol.">
        <title>Gasdermin D-mediated release of IL-33 from senescent hepatic stellate cells promotes obesity-associated hepatocellular carcinoma.</title>
        <authorList>
            <person name="Yamagishi R."/>
            <person name="Kamachi F."/>
            <person name="Nakamura M."/>
            <person name="Yamazaki S."/>
            <person name="Kamiya T."/>
            <person name="Takasugi M."/>
            <person name="Cheng Y."/>
            <person name="Nonaka Y."/>
            <person name="Yukawa-Muto Y."/>
            <person name="Thuy L.T.T."/>
            <person name="Harada Y."/>
            <person name="Arai T."/>
            <person name="Loo T.M."/>
            <person name="Yoshimoto S."/>
            <person name="Ando T."/>
            <person name="Nakajima M."/>
            <person name="Taguchi H."/>
            <person name="Ishikawa T."/>
            <person name="Akiba H."/>
            <person name="Miyake S."/>
            <person name="Kubo M."/>
            <person name="Iwakura Y."/>
            <person name="Fukuda S."/>
            <person name="Chen W.Y."/>
            <person name="Kawada N."/>
            <person name="Rudensky A."/>
            <person name="Nakae S."/>
            <person name="Hara E."/>
            <person name="Ohtani N."/>
        </authorList>
    </citation>
    <scope>FUNCTION</scope>
    <scope>CATALYTIC ACTIVITY</scope>
</reference>
<name>CELA1_MOUSE</name>
<proteinExistence type="evidence at protein level"/>
<keyword id="KW-0106">Calcium</keyword>
<keyword id="KW-1015">Disulfide bond</keyword>
<keyword id="KW-0325">Glycoprotein</keyword>
<keyword id="KW-0378">Hydrolase</keyword>
<keyword id="KW-0479">Metal-binding</keyword>
<keyword id="KW-0645">Protease</keyword>
<keyword id="KW-1185">Reference proteome</keyword>
<keyword id="KW-0964">Secreted</keyword>
<keyword id="KW-0720">Serine protease</keyword>
<keyword id="KW-0732">Signal</keyword>
<keyword id="KW-0865">Zymogen</keyword>
<organism>
    <name type="scientific">Mus musculus</name>
    <name type="common">Mouse</name>
    <dbReference type="NCBI Taxonomy" id="10090"/>
    <lineage>
        <taxon>Eukaryota</taxon>
        <taxon>Metazoa</taxon>
        <taxon>Chordata</taxon>
        <taxon>Craniata</taxon>
        <taxon>Vertebrata</taxon>
        <taxon>Euteleostomi</taxon>
        <taxon>Mammalia</taxon>
        <taxon>Eutheria</taxon>
        <taxon>Euarchontoglires</taxon>
        <taxon>Glires</taxon>
        <taxon>Rodentia</taxon>
        <taxon>Myomorpha</taxon>
        <taxon>Muroidea</taxon>
        <taxon>Muridae</taxon>
        <taxon>Murinae</taxon>
        <taxon>Mus</taxon>
        <taxon>Mus</taxon>
    </lineage>
</organism>
<protein>
    <recommendedName>
        <fullName>Chymotrypsin-like elastase family member 1</fullName>
        <ecNumber evidence="4">3.4.21.36</ecNumber>
    </recommendedName>
    <alternativeName>
        <fullName>Elastase-1</fullName>
    </alternativeName>
</protein>
<gene>
    <name type="primary">Cela1</name>
    <name type="synonym">Ela1</name>
</gene>